<reference key="1">
    <citation type="book" date="2006" name="Gram positive pathogens, 2nd edition">
        <title>The Staphylococcus aureus NCTC 8325 genome.</title>
        <editorList>
            <person name="Fischetti V."/>
            <person name="Novick R."/>
            <person name="Ferretti J."/>
            <person name="Portnoy D."/>
            <person name="Rood J."/>
        </editorList>
        <authorList>
            <person name="Gillaspy A.F."/>
            <person name="Worrell V."/>
            <person name="Orvis J."/>
            <person name="Roe B.A."/>
            <person name="Dyer D.W."/>
            <person name="Iandolo J.J."/>
        </authorList>
    </citation>
    <scope>NUCLEOTIDE SEQUENCE [LARGE SCALE GENOMIC DNA]</scope>
    <source>
        <strain>NCTC 8325 / PS 47</strain>
    </source>
</reference>
<accession>Q2FXV1</accession>
<sequence length="60" mass="6682">MADESKFDQFKGNVKETVGNVTDNKELEKEGQQDKATGKAKEVVENAKNKITDAIDKLKK</sequence>
<organism>
    <name type="scientific">Staphylococcus aureus (strain NCTC 8325 / PS 47)</name>
    <dbReference type="NCBI Taxonomy" id="93061"/>
    <lineage>
        <taxon>Bacteria</taxon>
        <taxon>Bacillati</taxon>
        <taxon>Bacillota</taxon>
        <taxon>Bacilli</taxon>
        <taxon>Bacillales</taxon>
        <taxon>Staphylococcaceae</taxon>
        <taxon>Staphylococcus</taxon>
    </lineage>
</organism>
<keyword id="KW-1185">Reference proteome</keyword>
<name>Y1730_STAA8</name>
<protein>
    <recommendedName>
        <fullName>UPF0337 protein SAOUHSC_01730</fullName>
    </recommendedName>
</protein>
<dbReference type="EMBL" id="CP000253">
    <property type="protein sequence ID" value="ABD30803.1"/>
    <property type="molecule type" value="Genomic_DNA"/>
</dbReference>
<dbReference type="RefSeq" id="WP_000752909.1">
    <property type="nucleotide sequence ID" value="NZ_LS483365.1"/>
</dbReference>
<dbReference type="RefSeq" id="YP_500239.1">
    <property type="nucleotide sequence ID" value="NC_007795.1"/>
</dbReference>
<dbReference type="SMR" id="Q2FXV1"/>
<dbReference type="STRING" id="93061.SAOUHSC_01730"/>
<dbReference type="PaxDb" id="1280-SAXN108_1653"/>
<dbReference type="GeneID" id="3921080"/>
<dbReference type="KEGG" id="sao:SAOUHSC_01730"/>
<dbReference type="PATRIC" id="fig|93061.5.peg.1578"/>
<dbReference type="eggNOG" id="COG3237">
    <property type="taxonomic scope" value="Bacteria"/>
</dbReference>
<dbReference type="HOGENOM" id="CLU_135567_0_3_9"/>
<dbReference type="OrthoDB" id="2134937at2"/>
<dbReference type="PRO" id="PR:Q2FXV1"/>
<dbReference type="Proteomes" id="UP000008816">
    <property type="component" value="Chromosome"/>
</dbReference>
<dbReference type="Gene3D" id="1.10.1470.10">
    <property type="entry name" value="YjbJ"/>
    <property type="match status" value="1"/>
</dbReference>
<dbReference type="InterPro" id="IPR008462">
    <property type="entry name" value="CsbD"/>
</dbReference>
<dbReference type="InterPro" id="IPR050423">
    <property type="entry name" value="UPF0337_stress_rsp"/>
</dbReference>
<dbReference type="InterPro" id="IPR036629">
    <property type="entry name" value="YjbJ_sf"/>
</dbReference>
<dbReference type="PANTHER" id="PTHR34977">
    <property type="entry name" value="UPF0337 PROTEIN YJBJ"/>
    <property type="match status" value="1"/>
</dbReference>
<dbReference type="PANTHER" id="PTHR34977:SF1">
    <property type="entry name" value="UPF0337 PROTEIN YJBJ"/>
    <property type="match status" value="1"/>
</dbReference>
<dbReference type="Pfam" id="PF05532">
    <property type="entry name" value="CsbD"/>
    <property type="match status" value="1"/>
</dbReference>
<dbReference type="SUPFAM" id="SSF69047">
    <property type="entry name" value="Hypothetical protein YjbJ"/>
    <property type="match status" value="1"/>
</dbReference>
<comment type="similarity">
    <text evidence="2">Belongs to the UPF0337 (CsbD) family.</text>
</comment>
<proteinExistence type="inferred from homology"/>
<gene>
    <name type="ordered locus">SAOUHSC_01730</name>
</gene>
<evidence type="ECO:0000256" key="1">
    <source>
        <dbReference type="SAM" id="MobiDB-lite"/>
    </source>
</evidence>
<evidence type="ECO:0000305" key="2"/>
<feature type="chain" id="PRO_0000272678" description="UPF0337 protein SAOUHSC_01730">
    <location>
        <begin position="1"/>
        <end position="60"/>
    </location>
</feature>
<feature type="region of interest" description="Disordered" evidence="1">
    <location>
        <begin position="18"/>
        <end position="41"/>
    </location>
</feature>
<feature type="compositionally biased region" description="Basic and acidic residues" evidence="1">
    <location>
        <begin position="23"/>
        <end position="41"/>
    </location>
</feature>